<comment type="function">
    <text evidence="1">Forms part of the ribosomal stalk, playing a central role in the interaction of the ribosome with GTP-bound translation factors.</text>
</comment>
<comment type="subunit">
    <text evidence="1">Part of the ribosomal stalk of the 50S ribosomal subunit. The N-terminus interacts with L11 and the large rRNA to form the base of the stalk. The C-terminus forms an elongated spine to which L12 dimers bind in a sequential fashion forming a multimeric L10(L12)X complex.</text>
</comment>
<comment type="similarity">
    <text evidence="1">Belongs to the universal ribosomal protein uL10 family.</text>
</comment>
<feature type="chain" id="PRO_0000154748" description="Large ribosomal subunit protein uL10">
    <location>
        <begin position="1"/>
        <end position="160"/>
    </location>
</feature>
<organism>
    <name type="scientific">Wolinella succinogenes (strain ATCC 29543 / DSM 1740 / CCUG 13145 / JCM 31913 / LMG 7466 / NCTC 11488 / FDC 602W)</name>
    <name type="common">Vibrio succinogenes</name>
    <dbReference type="NCBI Taxonomy" id="273121"/>
    <lineage>
        <taxon>Bacteria</taxon>
        <taxon>Pseudomonadati</taxon>
        <taxon>Campylobacterota</taxon>
        <taxon>Epsilonproteobacteria</taxon>
        <taxon>Campylobacterales</taxon>
        <taxon>Helicobacteraceae</taxon>
        <taxon>Wolinella</taxon>
    </lineage>
</organism>
<gene>
    <name evidence="1" type="primary">rplJ</name>
    <name type="ordered locus">WS0465</name>
</gene>
<proteinExistence type="inferred from homology"/>
<sequence length="160" mass="17811">MTKTEKTQIIETLTAEFKASSAIAVCDYKGLTVRQFEALRRAARDNGAKVQVVKNTLAGIALENADAKGLELKETNVFVWSDDQIALSKTIMKFAETSNEKFKVKFGYYEGSVVDAAHIETVSKLPSRDELIGMLLSVWTAPARYFVTALDNLKKQKEEN</sequence>
<protein>
    <recommendedName>
        <fullName evidence="1">Large ribosomal subunit protein uL10</fullName>
    </recommendedName>
    <alternativeName>
        <fullName evidence="2">50S ribosomal protein L10</fullName>
    </alternativeName>
</protein>
<reference key="1">
    <citation type="journal article" date="2003" name="Proc. Natl. Acad. Sci. U.S.A.">
        <title>Complete genome sequence and analysis of Wolinella succinogenes.</title>
        <authorList>
            <person name="Baar C."/>
            <person name="Eppinger M."/>
            <person name="Raddatz G."/>
            <person name="Simon J."/>
            <person name="Lanz C."/>
            <person name="Klimmek O."/>
            <person name="Nandakumar R."/>
            <person name="Gross R."/>
            <person name="Rosinus A."/>
            <person name="Keller H."/>
            <person name="Jagtap P."/>
            <person name="Linke B."/>
            <person name="Meyer F."/>
            <person name="Lederer H."/>
            <person name="Schuster S.C."/>
        </authorList>
    </citation>
    <scope>NUCLEOTIDE SEQUENCE [LARGE SCALE GENOMIC DNA]</scope>
    <source>
        <strain>ATCC 29543 / DSM 1740 / CCUG 13145 / JCM 31913 / LMG 7466 / NCTC 11488 / FDC 602W</strain>
    </source>
</reference>
<accession>Q7MA58</accession>
<name>RL10_WOLSU</name>
<evidence type="ECO:0000255" key="1">
    <source>
        <dbReference type="HAMAP-Rule" id="MF_00362"/>
    </source>
</evidence>
<evidence type="ECO:0000305" key="2"/>
<keyword id="KW-1185">Reference proteome</keyword>
<keyword id="KW-0687">Ribonucleoprotein</keyword>
<keyword id="KW-0689">Ribosomal protein</keyword>
<keyword id="KW-0694">RNA-binding</keyword>
<keyword id="KW-0699">rRNA-binding</keyword>
<dbReference type="EMBL" id="BX571658">
    <property type="protein sequence ID" value="CAE09605.1"/>
    <property type="molecule type" value="Genomic_DNA"/>
</dbReference>
<dbReference type="RefSeq" id="WP_011138405.1">
    <property type="nucleotide sequence ID" value="NC_005090.1"/>
</dbReference>
<dbReference type="SMR" id="Q7MA58"/>
<dbReference type="STRING" id="273121.WS0465"/>
<dbReference type="KEGG" id="wsu:WS0465"/>
<dbReference type="eggNOG" id="COG0244">
    <property type="taxonomic scope" value="Bacteria"/>
</dbReference>
<dbReference type="HOGENOM" id="CLU_092227_2_2_7"/>
<dbReference type="Proteomes" id="UP000000422">
    <property type="component" value="Chromosome"/>
</dbReference>
<dbReference type="GO" id="GO:1990904">
    <property type="term" value="C:ribonucleoprotein complex"/>
    <property type="evidence" value="ECO:0007669"/>
    <property type="project" value="UniProtKB-KW"/>
</dbReference>
<dbReference type="GO" id="GO:0005840">
    <property type="term" value="C:ribosome"/>
    <property type="evidence" value="ECO:0007669"/>
    <property type="project" value="UniProtKB-KW"/>
</dbReference>
<dbReference type="GO" id="GO:0070180">
    <property type="term" value="F:large ribosomal subunit rRNA binding"/>
    <property type="evidence" value="ECO:0007669"/>
    <property type="project" value="UniProtKB-UniRule"/>
</dbReference>
<dbReference type="GO" id="GO:0006412">
    <property type="term" value="P:translation"/>
    <property type="evidence" value="ECO:0007669"/>
    <property type="project" value="UniProtKB-UniRule"/>
</dbReference>
<dbReference type="CDD" id="cd05797">
    <property type="entry name" value="Ribosomal_L10"/>
    <property type="match status" value="1"/>
</dbReference>
<dbReference type="Gene3D" id="3.30.70.1730">
    <property type="match status" value="1"/>
</dbReference>
<dbReference type="HAMAP" id="MF_00362">
    <property type="entry name" value="Ribosomal_uL10"/>
    <property type="match status" value="1"/>
</dbReference>
<dbReference type="InterPro" id="IPR001790">
    <property type="entry name" value="Ribosomal_uL10"/>
</dbReference>
<dbReference type="InterPro" id="IPR043141">
    <property type="entry name" value="Ribosomal_uL10-like_sf"/>
</dbReference>
<dbReference type="InterPro" id="IPR022973">
    <property type="entry name" value="Ribosomal_uL10_bac"/>
</dbReference>
<dbReference type="InterPro" id="IPR047865">
    <property type="entry name" value="Ribosomal_uL10_bac_type"/>
</dbReference>
<dbReference type="NCBIfam" id="NF000955">
    <property type="entry name" value="PRK00099.1-1"/>
    <property type="match status" value="1"/>
</dbReference>
<dbReference type="PANTHER" id="PTHR11560">
    <property type="entry name" value="39S RIBOSOMAL PROTEIN L10, MITOCHONDRIAL"/>
    <property type="match status" value="1"/>
</dbReference>
<dbReference type="Pfam" id="PF00466">
    <property type="entry name" value="Ribosomal_L10"/>
    <property type="match status" value="1"/>
</dbReference>
<dbReference type="SUPFAM" id="SSF160369">
    <property type="entry name" value="Ribosomal protein L10-like"/>
    <property type="match status" value="1"/>
</dbReference>